<dbReference type="EMBL" id="CU329671">
    <property type="protein sequence ID" value="CAA19292.1"/>
    <property type="molecule type" value="Genomic_DNA"/>
</dbReference>
<dbReference type="PIR" id="T40484">
    <property type="entry name" value="T40484"/>
</dbReference>
<dbReference type="RefSeq" id="NP_596429.1">
    <property type="nucleotide sequence ID" value="NM_001022348.2"/>
</dbReference>
<dbReference type="SMR" id="O74973"/>
<dbReference type="PaxDb" id="4896-SPBC4B4.12c.1"/>
<dbReference type="EnsemblFungi" id="SPBC4B4.12c.1">
    <property type="protein sequence ID" value="SPBC4B4.12c.1:pep"/>
    <property type="gene ID" value="SPBC4B4.12c"/>
</dbReference>
<dbReference type="KEGG" id="spo:2540854"/>
<dbReference type="PomBase" id="SPBC4B4.12c"/>
<dbReference type="VEuPathDB" id="FungiDB:SPBC4B4.12c"/>
<dbReference type="HOGENOM" id="CLU_2172537_0_0_1"/>
<dbReference type="InParanoid" id="O74973"/>
<dbReference type="OMA" id="SFQRWFH"/>
<dbReference type="PRO" id="PR:O74973"/>
<dbReference type="Proteomes" id="UP000002485">
    <property type="component" value="Chromosome II"/>
</dbReference>
<dbReference type="GO" id="GO:0005829">
    <property type="term" value="C:cytosol"/>
    <property type="evidence" value="ECO:0007005"/>
    <property type="project" value="PomBase"/>
</dbReference>
<dbReference type="GO" id="GO:0005634">
    <property type="term" value="C:nucleus"/>
    <property type="evidence" value="ECO:0007005"/>
    <property type="project" value="PomBase"/>
</dbReference>
<proteinExistence type="predicted"/>
<name>YOKC_SCHPO</name>
<reference key="1">
    <citation type="journal article" date="2002" name="Nature">
        <title>The genome sequence of Schizosaccharomyces pombe.</title>
        <authorList>
            <person name="Wood V."/>
            <person name="Gwilliam R."/>
            <person name="Rajandream M.A."/>
            <person name="Lyne M.H."/>
            <person name="Lyne R."/>
            <person name="Stewart A."/>
            <person name="Sgouros J.G."/>
            <person name="Peat N."/>
            <person name="Hayles J."/>
            <person name="Baker S.G."/>
            <person name="Basham D."/>
            <person name="Bowman S."/>
            <person name="Brooks K."/>
            <person name="Brown D."/>
            <person name="Brown S."/>
            <person name="Chillingworth T."/>
            <person name="Churcher C.M."/>
            <person name="Collins M."/>
            <person name="Connor R."/>
            <person name="Cronin A."/>
            <person name="Davis P."/>
            <person name="Feltwell T."/>
            <person name="Fraser A."/>
            <person name="Gentles S."/>
            <person name="Goble A."/>
            <person name="Hamlin N."/>
            <person name="Harris D.E."/>
            <person name="Hidalgo J."/>
            <person name="Hodgson G."/>
            <person name="Holroyd S."/>
            <person name="Hornsby T."/>
            <person name="Howarth S."/>
            <person name="Huckle E.J."/>
            <person name="Hunt S."/>
            <person name="Jagels K."/>
            <person name="James K.D."/>
            <person name="Jones L."/>
            <person name="Jones M."/>
            <person name="Leather S."/>
            <person name="McDonald S."/>
            <person name="McLean J."/>
            <person name="Mooney P."/>
            <person name="Moule S."/>
            <person name="Mungall K.L."/>
            <person name="Murphy L.D."/>
            <person name="Niblett D."/>
            <person name="Odell C."/>
            <person name="Oliver K."/>
            <person name="O'Neil S."/>
            <person name="Pearson D."/>
            <person name="Quail M.A."/>
            <person name="Rabbinowitsch E."/>
            <person name="Rutherford K.M."/>
            <person name="Rutter S."/>
            <person name="Saunders D."/>
            <person name="Seeger K."/>
            <person name="Sharp S."/>
            <person name="Skelton J."/>
            <person name="Simmonds M.N."/>
            <person name="Squares R."/>
            <person name="Squares S."/>
            <person name="Stevens K."/>
            <person name="Taylor K."/>
            <person name="Taylor R.G."/>
            <person name="Tivey A."/>
            <person name="Walsh S.V."/>
            <person name="Warren T."/>
            <person name="Whitehead S."/>
            <person name="Woodward J.R."/>
            <person name="Volckaert G."/>
            <person name="Aert R."/>
            <person name="Robben J."/>
            <person name="Grymonprez B."/>
            <person name="Weltjens I."/>
            <person name="Vanstreels E."/>
            <person name="Rieger M."/>
            <person name="Schaefer M."/>
            <person name="Mueller-Auer S."/>
            <person name="Gabel C."/>
            <person name="Fuchs M."/>
            <person name="Duesterhoeft A."/>
            <person name="Fritzc C."/>
            <person name="Holzer E."/>
            <person name="Moestl D."/>
            <person name="Hilbert H."/>
            <person name="Borzym K."/>
            <person name="Langer I."/>
            <person name="Beck A."/>
            <person name="Lehrach H."/>
            <person name="Reinhardt R."/>
            <person name="Pohl T.M."/>
            <person name="Eger P."/>
            <person name="Zimmermann W."/>
            <person name="Wedler H."/>
            <person name="Wambutt R."/>
            <person name="Purnelle B."/>
            <person name="Goffeau A."/>
            <person name="Cadieu E."/>
            <person name="Dreano S."/>
            <person name="Gloux S."/>
            <person name="Lelaure V."/>
            <person name="Mottier S."/>
            <person name="Galibert F."/>
            <person name="Aves S.J."/>
            <person name="Xiang Z."/>
            <person name="Hunt C."/>
            <person name="Moore K."/>
            <person name="Hurst S.M."/>
            <person name="Lucas M."/>
            <person name="Rochet M."/>
            <person name="Gaillardin C."/>
            <person name="Tallada V.A."/>
            <person name="Garzon A."/>
            <person name="Thode G."/>
            <person name="Daga R.R."/>
            <person name="Cruzado L."/>
            <person name="Jimenez J."/>
            <person name="Sanchez M."/>
            <person name="del Rey F."/>
            <person name="Benito J."/>
            <person name="Dominguez A."/>
            <person name="Revuelta J.L."/>
            <person name="Moreno S."/>
            <person name="Armstrong J."/>
            <person name="Forsburg S.L."/>
            <person name="Cerutti L."/>
            <person name="Lowe T."/>
            <person name="McCombie W.R."/>
            <person name="Paulsen I."/>
            <person name="Potashkin J."/>
            <person name="Shpakovski G.V."/>
            <person name="Ussery D."/>
            <person name="Barrell B.G."/>
            <person name="Nurse P."/>
        </authorList>
    </citation>
    <scope>NUCLEOTIDE SEQUENCE [LARGE SCALE GENOMIC DNA]</scope>
    <source>
        <strain>972 / ATCC 24843</strain>
    </source>
</reference>
<feature type="chain" id="PRO_0000116873" description="Uncharacterized protein C4B4.12c">
    <location>
        <begin position="1"/>
        <end position="110"/>
    </location>
</feature>
<organism>
    <name type="scientific">Schizosaccharomyces pombe (strain 972 / ATCC 24843)</name>
    <name type="common">Fission yeast</name>
    <dbReference type="NCBI Taxonomy" id="284812"/>
    <lineage>
        <taxon>Eukaryota</taxon>
        <taxon>Fungi</taxon>
        <taxon>Dikarya</taxon>
        <taxon>Ascomycota</taxon>
        <taxon>Taphrinomycotina</taxon>
        <taxon>Schizosaccharomycetes</taxon>
        <taxon>Schizosaccharomycetales</taxon>
        <taxon>Schizosaccharomycetaceae</taxon>
        <taxon>Schizosaccharomyces</taxon>
    </lineage>
</organism>
<protein>
    <recommendedName>
        <fullName>Uncharacterized protein C4B4.12c</fullName>
    </recommendedName>
</protein>
<gene>
    <name type="ORF">SPBC4B4.12c</name>
</gene>
<accession>O74973</accession>
<sequence length="110" mass="12822">MVSGNDQQVIEYTSVLKEFSDGVDLMELKENFLYIRTREKIEAKLIWAGEWEWKPVNETNENNLERGRQYPSANSALMENSPEFAKWFHGQLFNRLCVLGSTSSSRKDML</sequence>
<keyword id="KW-1185">Reference proteome</keyword>